<dbReference type="EC" id="3.2.2.27" evidence="1"/>
<dbReference type="EMBL" id="AP006627">
    <property type="protein sequence ID" value="BAD66461.1"/>
    <property type="molecule type" value="Genomic_DNA"/>
</dbReference>
<dbReference type="RefSeq" id="WP_011248764.1">
    <property type="nucleotide sequence ID" value="NC_006582.1"/>
</dbReference>
<dbReference type="SMR" id="Q5WAZ9"/>
<dbReference type="STRING" id="66692.ABC3930"/>
<dbReference type="KEGG" id="bcl:ABC3930"/>
<dbReference type="eggNOG" id="COG0692">
    <property type="taxonomic scope" value="Bacteria"/>
</dbReference>
<dbReference type="HOGENOM" id="CLU_032162_3_1_9"/>
<dbReference type="OrthoDB" id="9804372at2"/>
<dbReference type="Proteomes" id="UP000001168">
    <property type="component" value="Chromosome"/>
</dbReference>
<dbReference type="GO" id="GO:0005737">
    <property type="term" value="C:cytoplasm"/>
    <property type="evidence" value="ECO:0007669"/>
    <property type="project" value="UniProtKB-SubCell"/>
</dbReference>
<dbReference type="GO" id="GO:0004844">
    <property type="term" value="F:uracil DNA N-glycosylase activity"/>
    <property type="evidence" value="ECO:0007669"/>
    <property type="project" value="UniProtKB-UniRule"/>
</dbReference>
<dbReference type="GO" id="GO:0097510">
    <property type="term" value="P:base-excision repair, AP site formation via deaminated base removal"/>
    <property type="evidence" value="ECO:0007669"/>
    <property type="project" value="TreeGrafter"/>
</dbReference>
<dbReference type="CDD" id="cd10027">
    <property type="entry name" value="UDG-F1-like"/>
    <property type="match status" value="1"/>
</dbReference>
<dbReference type="FunFam" id="3.40.470.10:FF:000001">
    <property type="entry name" value="Uracil-DNA glycosylase"/>
    <property type="match status" value="1"/>
</dbReference>
<dbReference type="Gene3D" id="3.40.470.10">
    <property type="entry name" value="Uracil-DNA glycosylase-like domain"/>
    <property type="match status" value="1"/>
</dbReference>
<dbReference type="HAMAP" id="MF_00148">
    <property type="entry name" value="UDG"/>
    <property type="match status" value="1"/>
</dbReference>
<dbReference type="InterPro" id="IPR002043">
    <property type="entry name" value="UDG_fam1"/>
</dbReference>
<dbReference type="InterPro" id="IPR018085">
    <property type="entry name" value="Ura-DNA_Glyclase_AS"/>
</dbReference>
<dbReference type="InterPro" id="IPR005122">
    <property type="entry name" value="Uracil-DNA_glycosylase-like"/>
</dbReference>
<dbReference type="InterPro" id="IPR036895">
    <property type="entry name" value="Uracil-DNA_glycosylase-like_sf"/>
</dbReference>
<dbReference type="NCBIfam" id="NF003588">
    <property type="entry name" value="PRK05254.1-1"/>
    <property type="match status" value="1"/>
</dbReference>
<dbReference type="NCBIfam" id="NF003589">
    <property type="entry name" value="PRK05254.1-2"/>
    <property type="match status" value="1"/>
</dbReference>
<dbReference type="NCBIfam" id="NF003591">
    <property type="entry name" value="PRK05254.1-4"/>
    <property type="match status" value="1"/>
</dbReference>
<dbReference type="NCBIfam" id="NF003592">
    <property type="entry name" value="PRK05254.1-5"/>
    <property type="match status" value="1"/>
</dbReference>
<dbReference type="NCBIfam" id="TIGR00628">
    <property type="entry name" value="ung"/>
    <property type="match status" value="1"/>
</dbReference>
<dbReference type="PANTHER" id="PTHR11264">
    <property type="entry name" value="URACIL-DNA GLYCOSYLASE"/>
    <property type="match status" value="1"/>
</dbReference>
<dbReference type="PANTHER" id="PTHR11264:SF0">
    <property type="entry name" value="URACIL-DNA GLYCOSYLASE"/>
    <property type="match status" value="1"/>
</dbReference>
<dbReference type="Pfam" id="PF03167">
    <property type="entry name" value="UDG"/>
    <property type="match status" value="1"/>
</dbReference>
<dbReference type="SMART" id="SM00986">
    <property type="entry name" value="UDG"/>
    <property type="match status" value="1"/>
</dbReference>
<dbReference type="SMART" id="SM00987">
    <property type="entry name" value="UreE_C"/>
    <property type="match status" value="1"/>
</dbReference>
<dbReference type="SUPFAM" id="SSF52141">
    <property type="entry name" value="Uracil-DNA glycosylase-like"/>
    <property type="match status" value="1"/>
</dbReference>
<dbReference type="PROSITE" id="PS00130">
    <property type="entry name" value="U_DNA_GLYCOSYLASE"/>
    <property type="match status" value="1"/>
</dbReference>
<keyword id="KW-0963">Cytoplasm</keyword>
<keyword id="KW-0227">DNA damage</keyword>
<keyword id="KW-0234">DNA repair</keyword>
<keyword id="KW-0378">Hydrolase</keyword>
<keyword id="KW-1185">Reference proteome</keyword>
<evidence type="ECO:0000255" key="1">
    <source>
        <dbReference type="HAMAP-Rule" id="MF_00148"/>
    </source>
</evidence>
<feature type="chain" id="PRO_0000176066" description="Uracil-DNA glycosylase">
    <location>
        <begin position="1"/>
        <end position="232"/>
    </location>
</feature>
<feature type="active site" description="Proton acceptor" evidence="1">
    <location>
        <position position="64"/>
    </location>
</feature>
<comment type="function">
    <text evidence="1">Excises uracil residues from the DNA which can arise as a result of misincorporation of dUMP residues by DNA polymerase or due to deamination of cytosine.</text>
</comment>
<comment type="catalytic activity">
    <reaction evidence="1">
        <text>Hydrolyzes single-stranded DNA or mismatched double-stranded DNA and polynucleotides, releasing free uracil.</text>
        <dbReference type="EC" id="3.2.2.27"/>
    </reaction>
</comment>
<comment type="subcellular location">
    <subcellularLocation>
        <location evidence="1">Cytoplasm</location>
    </subcellularLocation>
</comment>
<comment type="similarity">
    <text evidence="1">Belongs to the uracil-DNA glycosylase (UDG) superfamily. UNG family.</text>
</comment>
<reference key="1">
    <citation type="submission" date="2003-10" db="EMBL/GenBank/DDBJ databases">
        <title>The complete genome sequence of the alkaliphilic Bacillus clausii KSM-K16.</title>
        <authorList>
            <person name="Takaki Y."/>
            <person name="Kageyama Y."/>
            <person name="Shimamura S."/>
            <person name="Suzuki H."/>
            <person name="Nishi S."/>
            <person name="Hatada Y."/>
            <person name="Kawai S."/>
            <person name="Ito S."/>
            <person name="Horikoshi K."/>
        </authorList>
    </citation>
    <scope>NUCLEOTIDE SEQUENCE [LARGE SCALE GENOMIC DNA]</scope>
    <source>
        <strain>KSM-K16</strain>
    </source>
</reference>
<accession>Q5WAZ9</accession>
<proteinExistence type="inferred from homology"/>
<sequence>MPILRNDWNDVIGGEFQKTYYLELREFLKREYKEQTVYPHMNDLFNAFHYTPFEQVKVVILGQDPYHGPNQAHGLSFSVKPEVAVPPSLKNMYKELQDDLGVTPVDHGYLQPWADQGVLLLNTVLSVRKRQPGSHKGKGWELFTNEVIHALNKREEPVAFVLWGRHAQAKKEAIDATRHLIIESAHPSPFSANRGFFGSRPFSKINHWLQEQGKAPVDWQLPMKAELYSYGK</sequence>
<name>UNG_SHOC1</name>
<organism>
    <name type="scientific">Shouchella clausii (strain KSM-K16)</name>
    <name type="common">Alkalihalobacillus clausii</name>
    <dbReference type="NCBI Taxonomy" id="66692"/>
    <lineage>
        <taxon>Bacteria</taxon>
        <taxon>Bacillati</taxon>
        <taxon>Bacillota</taxon>
        <taxon>Bacilli</taxon>
        <taxon>Bacillales</taxon>
        <taxon>Bacillaceae</taxon>
        <taxon>Shouchella</taxon>
    </lineage>
</organism>
<gene>
    <name evidence="1" type="primary">ung</name>
    <name type="ordered locus">ABC3930</name>
</gene>
<protein>
    <recommendedName>
        <fullName evidence="1">Uracil-DNA glycosylase</fullName>
        <shortName evidence="1">UDG</shortName>
        <ecNumber evidence="1">3.2.2.27</ecNumber>
    </recommendedName>
</protein>